<accession>A9MZG8</accession>
<sequence>MRHPLVMGNWKLNGSRHMVNELVANLRKELAGVAGCDVAIAPPEMYIDLAKRAAAGSHIMLGAQNVDLNLSGAFTGETSAEMLKDIGAQYIIIGHSERRTYHKESDELIAKKFAVLKEQGLTPVLCIGETEAENEAGKTEEVCARQIDAVLKTQGAAAFEGAVIAYEPVWAIGTGKSATPAQAQAVHKFIRDHIAKADAKIAEQVIIQYGGSVNASNAAELFAQPDIDGALVGGASLKADAFAVIVKAAEAAKQA</sequence>
<reference key="1">
    <citation type="submission" date="2007-11" db="EMBL/GenBank/DDBJ databases">
        <authorList>
            <consortium name="The Salmonella enterica serovar Paratyphi B Genome Sequencing Project"/>
            <person name="McClelland M."/>
            <person name="Sanderson E.K."/>
            <person name="Porwollik S."/>
            <person name="Spieth J."/>
            <person name="Clifton W.S."/>
            <person name="Fulton R."/>
            <person name="Cordes M."/>
            <person name="Wollam A."/>
            <person name="Shah N."/>
            <person name="Pepin K."/>
            <person name="Bhonagiri V."/>
            <person name="Nash W."/>
            <person name="Johnson M."/>
            <person name="Thiruvilangam P."/>
            <person name="Wilson R."/>
        </authorList>
    </citation>
    <scope>NUCLEOTIDE SEQUENCE [LARGE SCALE GENOMIC DNA]</scope>
    <source>
        <strain>ATCC BAA-1250 / SPB7</strain>
    </source>
</reference>
<organism>
    <name type="scientific">Salmonella paratyphi B (strain ATCC BAA-1250 / SPB7)</name>
    <dbReference type="NCBI Taxonomy" id="1016998"/>
    <lineage>
        <taxon>Bacteria</taxon>
        <taxon>Pseudomonadati</taxon>
        <taxon>Pseudomonadota</taxon>
        <taxon>Gammaproteobacteria</taxon>
        <taxon>Enterobacterales</taxon>
        <taxon>Enterobacteriaceae</taxon>
        <taxon>Salmonella</taxon>
    </lineage>
</organism>
<keyword id="KW-0963">Cytoplasm</keyword>
<keyword id="KW-0312">Gluconeogenesis</keyword>
<keyword id="KW-0324">Glycolysis</keyword>
<keyword id="KW-0413">Isomerase</keyword>
<gene>
    <name evidence="1" type="primary">tpiA</name>
    <name type="ordered locus">SPAB_05055</name>
</gene>
<protein>
    <recommendedName>
        <fullName evidence="1">Triosephosphate isomerase</fullName>
        <shortName evidence="1">TIM</shortName>
        <shortName evidence="1">TPI</shortName>
        <ecNumber evidence="1">5.3.1.1</ecNumber>
    </recommendedName>
    <alternativeName>
        <fullName evidence="1">Triose-phosphate isomerase</fullName>
    </alternativeName>
</protein>
<evidence type="ECO:0000255" key="1">
    <source>
        <dbReference type="HAMAP-Rule" id="MF_00147"/>
    </source>
</evidence>
<feature type="chain" id="PRO_1000076658" description="Triosephosphate isomerase">
    <location>
        <begin position="1"/>
        <end position="255"/>
    </location>
</feature>
<feature type="active site" description="Electrophile" evidence="1">
    <location>
        <position position="95"/>
    </location>
</feature>
<feature type="active site" description="Proton acceptor" evidence="1">
    <location>
        <position position="167"/>
    </location>
</feature>
<feature type="binding site" evidence="1">
    <location>
        <begin position="9"/>
        <end position="11"/>
    </location>
    <ligand>
        <name>substrate</name>
    </ligand>
</feature>
<feature type="binding site" evidence="1">
    <location>
        <position position="173"/>
    </location>
    <ligand>
        <name>substrate</name>
    </ligand>
</feature>
<feature type="binding site" evidence="1">
    <location>
        <position position="212"/>
    </location>
    <ligand>
        <name>substrate</name>
    </ligand>
</feature>
<feature type="binding site" evidence="1">
    <location>
        <begin position="233"/>
        <end position="234"/>
    </location>
    <ligand>
        <name>substrate</name>
    </ligand>
</feature>
<name>TPIS_SALPB</name>
<comment type="function">
    <text evidence="1">Involved in the gluconeogenesis. Catalyzes stereospecifically the conversion of dihydroxyacetone phosphate (DHAP) to D-glyceraldehyde-3-phosphate (G3P).</text>
</comment>
<comment type="catalytic activity">
    <reaction evidence="1">
        <text>D-glyceraldehyde 3-phosphate = dihydroxyacetone phosphate</text>
        <dbReference type="Rhea" id="RHEA:18585"/>
        <dbReference type="ChEBI" id="CHEBI:57642"/>
        <dbReference type="ChEBI" id="CHEBI:59776"/>
        <dbReference type="EC" id="5.3.1.1"/>
    </reaction>
</comment>
<comment type="pathway">
    <text evidence="1">Carbohydrate biosynthesis; gluconeogenesis.</text>
</comment>
<comment type="pathway">
    <text evidence="1">Carbohydrate degradation; glycolysis; D-glyceraldehyde 3-phosphate from glycerone phosphate: step 1/1.</text>
</comment>
<comment type="subunit">
    <text evidence="1">Homodimer.</text>
</comment>
<comment type="subcellular location">
    <subcellularLocation>
        <location evidence="1">Cytoplasm</location>
    </subcellularLocation>
</comment>
<comment type="similarity">
    <text evidence="1">Belongs to the triosephosphate isomerase family.</text>
</comment>
<dbReference type="EC" id="5.3.1.1" evidence="1"/>
<dbReference type="EMBL" id="CP000886">
    <property type="protein sequence ID" value="ABX70346.1"/>
    <property type="molecule type" value="Genomic_DNA"/>
</dbReference>
<dbReference type="RefSeq" id="WP_001216335.1">
    <property type="nucleotide sequence ID" value="NC_010102.1"/>
</dbReference>
<dbReference type="SMR" id="A9MZG8"/>
<dbReference type="KEGG" id="spq:SPAB_05055"/>
<dbReference type="PATRIC" id="fig|1016998.12.peg.4745"/>
<dbReference type="HOGENOM" id="CLU_024251_2_1_6"/>
<dbReference type="BioCyc" id="SENT1016998:SPAB_RS20575-MONOMER"/>
<dbReference type="UniPathway" id="UPA00109">
    <property type="reaction ID" value="UER00189"/>
</dbReference>
<dbReference type="UniPathway" id="UPA00138"/>
<dbReference type="Proteomes" id="UP000008556">
    <property type="component" value="Chromosome"/>
</dbReference>
<dbReference type="GO" id="GO:0005829">
    <property type="term" value="C:cytosol"/>
    <property type="evidence" value="ECO:0007669"/>
    <property type="project" value="TreeGrafter"/>
</dbReference>
<dbReference type="GO" id="GO:0004807">
    <property type="term" value="F:triose-phosphate isomerase activity"/>
    <property type="evidence" value="ECO:0007669"/>
    <property type="project" value="UniProtKB-UniRule"/>
</dbReference>
<dbReference type="GO" id="GO:0006094">
    <property type="term" value="P:gluconeogenesis"/>
    <property type="evidence" value="ECO:0007669"/>
    <property type="project" value="UniProtKB-UniRule"/>
</dbReference>
<dbReference type="GO" id="GO:0046166">
    <property type="term" value="P:glyceraldehyde-3-phosphate biosynthetic process"/>
    <property type="evidence" value="ECO:0007669"/>
    <property type="project" value="TreeGrafter"/>
</dbReference>
<dbReference type="GO" id="GO:0019563">
    <property type="term" value="P:glycerol catabolic process"/>
    <property type="evidence" value="ECO:0007669"/>
    <property type="project" value="TreeGrafter"/>
</dbReference>
<dbReference type="GO" id="GO:0006096">
    <property type="term" value="P:glycolytic process"/>
    <property type="evidence" value="ECO:0007669"/>
    <property type="project" value="UniProtKB-UniRule"/>
</dbReference>
<dbReference type="CDD" id="cd00311">
    <property type="entry name" value="TIM"/>
    <property type="match status" value="1"/>
</dbReference>
<dbReference type="FunFam" id="3.20.20.70:FF:000020">
    <property type="entry name" value="Triosephosphate isomerase"/>
    <property type="match status" value="1"/>
</dbReference>
<dbReference type="Gene3D" id="3.20.20.70">
    <property type="entry name" value="Aldolase class I"/>
    <property type="match status" value="1"/>
</dbReference>
<dbReference type="HAMAP" id="MF_00147_B">
    <property type="entry name" value="TIM_B"/>
    <property type="match status" value="1"/>
</dbReference>
<dbReference type="InterPro" id="IPR013785">
    <property type="entry name" value="Aldolase_TIM"/>
</dbReference>
<dbReference type="InterPro" id="IPR035990">
    <property type="entry name" value="TIM_sf"/>
</dbReference>
<dbReference type="InterPro" id="IPR022896">
    <property type="entry name" value="TrioseP_Isoase_bac/euk"/>
</dbReference>
<dbReference type="InterPro" id="IPR000652">
    <property type="entry name" value="Triosephosphate_isomerase"/>
</dbReference>
<dbReference type="InterPro" id="IPR020861">
    <property type="entry name" value="Triosephosphate_isomerase_AS"/>
</dbReference>
<dbReference type="NCBIfam" id="TIGR00419">
    <property type="entry name" value="tim"/>
    <property type="match status" value="1"/>
</dbReference>
<dbReference type="PANTHER" id="PTHR21139">
    <property type="entry name" value="TRIOSEPHOSPHATE ISOMERASE"/>
    <property type="match status" value="1"/>
</dbReference>
<dbReference type="PANTHER" id="PTHR21139:SF42">
    <property type="entry name" value="TRIOSEPHOSPHATE ISOMERASE"/>
    <property type="match status" value="1"/>
</dbReference>
<dbReference type="Pfam" id="PF00121">
    <property type="entry name" value="TIM"/>
    <property type="match status" value="1"/>
</dbReference>
<dbReference type="SUPFAM" id="SSF51351">
    <property type="entry name" value="Triosephosphate isomerase (TIM)"/>
    <property type="match status" value="1"/>
</dbReference>
<dbReference type="PROSITE" id="PS00171">
    <property type="entry name" value="TIM_1"/>
    <property type="match status" value="1"/>
</dbReference>
<dbReference type="PROSITE" id="PS51440">
    <property type="entry name" value="TIM_2"/>
    <property type="match status" value="1"/>
</dbReference>
<proteinExistence type="inferred from homology"/>